<feature type="chain" id="PRO_0000080846" description="Probable proline iminopeptidase">
    <location>
        <begin position="1"/>
        <end position="323"/>
    </location>
</feature>
<feature type="domain" description="AB hydrolase-1" evidence="2">
    <location>
        <begin position="37"/>
        <end position="301"/>
    </location>
</feature>
<feature type="active site" description="Nucleophile" evidence="1">
    <location>
        <position position="114"/>
    </location>
</feature>
<feature type="active site" evidence="1">
    <location>
        <position position="271"/>
    </location>
</feature>
<feature type="active site" description="Proton donor" evidence="1">
    <location>
        <position position="299"/>
    </location>
</feature>
<protein>
    <recommendedName>
        <fullName>Probable proline iminopeptidase</fullName>
        <shortName>PIP</shortName>
        <ecNumber>3.4.11.5</ecNumber>
    </recommendedName>
    <alternativeName>
        <fullName>Prolyl aminopeptidase</fullName>
        <shortName>PAP</shortName>
    </alternativeName>
</protein>
<gene>
    <name type="ordered locus">SCO1989</name>
    <name type="ORF">SC7H2.03c</name>
</gene>
<comment type="function">
    <text evidence="1">Specifically catalyzes the removal of N-terminal proline residues from peptides.</text>
</comment>
<comment type="catalytic activity">
    <reaction>
        <text>Release of N-terminal proline from a peptide.</text>
        <dbReference type="EC" id="3.4.11.5"/>
    </reaction>
</comment>
<comment type="subcellular location">
    <subcellularLocation>
        <location evidence="1">Cytoplasm</location>
    </subcellularLocation>
</comment>
<comment type="similarity">
    <text evidence="3">Belongs to the peptidase S33 family.</text>
</comment>
<proteinExistence type="inferred from homology"/>
<dbReference type="EC" id="3.4.11.5"/>
<dbReference type="EMBL" id="AL939111">
    <property type="protein sequence ID" value="CAB52045.1"/>
    <property type="molecule type" value="Genomic_DNA"/>
</dbReference>
<dbReference type="PIR" id="T35734">
    <property type="entry name" value="T35734"/>
</dbReference>
<dbReference type="RefSeq" id="NP_626250.1">
    <property type="nucleotide sequence ID" value="NC_003888.3"/>
</dbReference>
<dbReference type="SMR" id="Q9S2L4"/>
<dbReference type="STRING" id="100226.gene:17759586"/>
<dbReference type="ESTHER" id="strco-SC7H2.03c">
    <property type="family name" value="Proline_iminopeptidase"/>
</dbReference>
<dbReference type="MEROPS" id="S33.001"/>
<dbReference type="PaxDb" id="100226-SCO1989"/>
<dbReference type="KEGG" id="sco:SCO1989"/>
<dbReference type="PATRIC" id="fig|100226.15.peg.2016"/>
<dbReference type="eggNOG" id="COG2267">
    <property type="taxonomic scope" value="Bacteria"/>
</dbReference>
<dbReference type="HOGENOM" id="CLU_043739_2_2_11"/>
<dbReference type="InParanoid" id="Q9S2L4"/>
<dbReference type="OrthoDB" id="9796770at2"/>
<dbReference type="PhylomeDB" id="Q9S2L4"/>
<dbReference type="Proteomes" id="UP000001973">
    <property type="component" value="Chromosome"/>
</dbReference>
<dbReference type="GO" id="GO:0005737">
    <property type="term" value="C:cytoplasm"/>
    <property type="evidence" value="ECO:0007669"/>
    <property type="project" value="UniProtKB-SubCell"/>
</dbReference>
<dbReference type="GO" id="GO:0004177">
    <property type="term" value="F:aminopeptidase activity"/>
    <property type="evidence" value="ECO:0007669"/>
    <property type="project" value="UniProtKB-KW"/>
</dbReference>
<dbReference type="GO" id="GO:0006508">
    <property type="term" value="P:proteolysis"/>
    <property type="evidence" value="ECO:0007669"/>
    <property type="project" value="UniProtKB-KW"/>
</dbReference>
<dbReference type="Gene3D" id="3.40.50.1820">
    <property type="entry name" value="alpha/beta hydrolase"/>
    <property type="match status" value="1"/>
</dbReference>
<dbReference type="InterPro" id="IPR000073">
    <property type="entry name" value="AB_hydrolase_1"/>
</dbReference>
<dbReference type="InterPro" id="IPR029058">
    <property type="entry name" value="AB_hydrolase_fold"/>
</dbReference>
<dbReference type="InterPro" id="IPR002410">
    <property type="entry name" value="Peptidase_S33"/>
</dbReference>
<dbReference type="InterPro" id="IPR005944">
    <property type="entry name" value="Pro_iminopeptidase"/>
</dbReference>
<dbReference type="NCBIfam" id="TIGR01249">
    <property type="entry name" value="pro_imino_pep_1"/>
    <property type="match status" value="1"/>
</dbReference>
<dbReference type="PANTHER" id="PTHR43722">
    <property type="entry name" value="PROLINE IMINOPEPTIDASE"/>
    <property type="match status" value="1"/>
</dbReference>
<dbReference type="PANTHER" id="PTHR43722:SF1">
    <property type="entry name" value="PROLINE IMINOPEPTIDASE"/>
    <property type="match status" value="1"/>
</dbReference>
<dbReference type="Pfam" id="PF00561">
    <property type="entry name" value="Abhydrolase_1"/>
    <property type="match status" value="1"/>
</dbReference>
<dbReference type="PIRSF" id="PIRSF006431">
    <property type="entry name" value="Pept_S33"/>
    <property type="match status" value="1"/>
</dbReference>
<dbReference type="PRINTS" id="PR00793">
    <property type="entry name" value="PROAMNOPTASE"/>
</dbReference>
<dbReference type="SUPFAM" id="SSF53474">
    <property type="entry name" value="alpha/beta-Hydrolases"/>
    <property type="match status" value="1"/>
</dbReference>
<sequence>MSLYPEIEPYDHGMLDVGDGNHVYWETCGNPHGKPAVVLHGGPGSRASPGLRRYFDPAAYRIVLLDQRGAGRSLPRASAPDTDMSVNTTAHLMADLERLRVHLGIERWLVWGVSWGSVLGLRYAQTHPGVVTELVLTGVATGSNAEVALLTRGLGNIFPEAHERFLAELPPDARDGNLPAAYNRLLESPDPAVRERAARAWTDWETATIPAPPGSVARYQDPDFRMGFARTVTHYWGNDHFLGDGNDEGVVIRDAHLLKGIPGTLVQGSLDFGNLLGIVWRLHHAWPDSDLVIVDEAGHDAGTTGDEALLAATDKYARGGTAE</sequence>
<keyword id="KW-0031">Aminopeptidase</keyword>
<keyword id="KW-0963">Cytoplasm</keyword>
<keyword id="KW-0378">Hydrolase</keyword>
<keyword id="KW-0645">Protease</keyword>
<keyword id="KW-1185">Reference proteome</keyword>
<organism>
    <name type="scientific">Streptomyces coelicolor (strain ATCC BAA-471 / A3(2) / M145)</name>
    <dbReference type="NCBI Taxonomy" id="100226"/>
    <lineage>
        <taxon>Bacteria</taxon>
        <taxon>Bacillati</taxon>
        <taxon>Actinomycetota</taxon>
        <taxon>Actinomycetes</taxon>
        <taxon>Kitasatosporales</taxon>
        <taxon>Streptomycetaceae</taxon>
        <taxon>Streptomyces</taxon>
        <taxon>Streptomyces albidoflavus group</taxon>
    </lineage>
</organism>
<reference key="1">
    <citation type="journal article" date="2002" name="Nature">
        <title>Complete genome sequence of the model actinomycete Streptomyces coelicolor A3(2).</title>
        <authorList>
            <person name="Bentley S.D."/>
            <person name="Chater K.F."/>
            <person name="Cerdeno-Tarraga A.-M."/>
            <person name="Challis G.L."/>
            <person name="Thomson N.R."/>
            <person name="James K.D."/>
            <person name="Harris D.E."/>
            <person name="Quail M.A."/>
            <person name="Kieser H."/>
            <person name="Harper D."/>
            <person name="Bateman A."/>
            <person name="Brown S."/>
            <person name="Chandra G."/>
            <person name="Chen C.W."/>
            <person name="Collins M."/>
            <person name="Cronin A."/>
            <person name="Fraser A."/>
            <person name="Goble A."/>
            <person name="Hidalgo J."/>
            <person name="Hornsby T."/>
            <person name="Howarth S."/>
            <person name="Huang C.-H."/>
            <person name="Kieser T."/>
            <person name="Larke L."/>
            <person name="Murphy L.D."/>
            <person name="Oliver K."/>
            <person name="O'Neil S."/>
            <person name="Rabbinowitsch E."/>
            <person name="Rajandream M.A."/>
            <person name="Rutherford K.M."/>
            <person name="Rutter S."/>
            <person name="Seeger K."/>
            <person name="Saunders D."/>
            <person name="Sharp S."/>
            <person name="Squares R."/>
            <person name="Squares S."/>
            <person name="Taylor K."/>
            <person name="Warren T."/>
            <person name="Wietzorrek A."/>
            <person name="Woodward J.R."/>
            <person name="Barrell B.G."/>
            <person name="Parkhill J."/>
            <person name="Hopwood D.A."/>
        </authorList>
    </citation>
    <scope>NUCLEOTIDE SEQUENCE [LARGE SCALE GENOMIC DNA]</scope>
    <source>
        <strain>ATCC BAA-471 / A3(2) / M145</strain>
    </source>
</reference>
<name>PIP_STRCO</name>
<evidence type="ECO:0000250" key="1"/>
<evidence type="ECO:0000255" key="2"/>
<evidence type="ECO:0000305" key="3"/>
<accession>Q9S2L4</accession>